<name>RPOC_GEOKA</name>
<keyword id="KW-0240">DNA-directed RNA polymerase</keyword>
<keyword id="KW-0460">Magnesium</keyword>
<keyword id="KW-0479">Metal-binding</keyword>
<keyword id="KW-0548">Nucleotidyltransferase</keyword>
<keyword id="KW-1185">Reference proteome</keyword>
<keyword id="KW-0804">Transcription</keyword>
<keyword id="KW-0808">Transferase</keyword>
<keyword id="KW-0862">Zinc</keyword>
<proteinExistence type="inferred from homology"/>
<evidence type="ECO:0000255" key="1">
    <source>
        <dbReference type="HAMAP-Rule" id="MF_01322"/>
    </source>
</evidence>
<accession>Q5L404</accession>
<sequence length="1199" mass="134881">MLDVNKFEYMKIGLASPEKIRSWSYGEVKKPETINYRTLKPEKDGLFCERIFGPTKDWECHCGKYKRVRYKGVVCDRCGVEVTRSKVRRERMGHIELAAPVSHIWYFKGIPSRMGLVLDMSPRALEEVIYFASYVVTDPGDTPLEKKQLLSEKEYRAYREKYGQSFQASMGAEAIKKLLQDIDLDKEVAALKEELKTAQGQRRARIIKRLEVLEAFRSSGNDPAWMVLDVLPVIPPELRPMVQLDGGRFATSDLNDLYRRVINRNNRLKRLLDLGAPNIIVQNEKRMLQEAVDALIDNGRRGRPVTGPGNRPLKSLSHMLKGKQGRFRQNLLGKRVDYSGRSVIVVGPNLKMYQCGLPKEMALELFKPFVMKELVERGLAHNIKSAKRKIERVHPEVWDVLEDVIKEHPVLLNRAPTLHRLGIQAFEPTLVEGRAIRLHPLVCTAYNADFDGDQMAVHVPLSAEAQAEARLLMLAAQNILNPKDGKPVVTPSQDMVLGNYYLTMEREGAIGEGMVFKDTDEALLAYHNGYVHLHSRIAIHAGSLKNETFTEEQNNKLLLTTVGKLIFNEILPNSFPYINEPTTENIEGRTPDKYFLDKGVNVREEIRKRELVPPFKKKVLGQIIAEVFKRFKITETSKMLDRMKDLGFQYSTKAGITIGVADIVVLPEKQEILDEAQAKVDTVLKQFRRGLITDEERYERVISIWSAAKDKIQDRLMKSLDKRNPIFMMSDSGARGNASNFTQLAGMRGLMANPAGRIIELPIKSSFREGLTVLEYFISTHGARKGLADTALKTADSGYLTRRLVDVAQDVIVREEDCGTDRGILARALTDGTEVVVKLEERLVGRYAHKTVRHPETGEVIVRKDEMITEDIANEIMKAGITEVWIRSVFACNTRHGVCKKCYGRNMATGMDVEVGEAVGIIAAQSIGEPGTQLTMRTFHTGGVAGDDITQGLPRVQELFEARNPKGQAVISEIDGTVISINKTRDNQYEVVVQGEVETRTYVAPYNARLKVEEGQRVERGQELTEGSVDPKQLLRVRDITSVQEYLLREVQKVYRMQGVEISDKHIEVMVRQMLRKVRVIDAGDTDVLPGTLLDVHQFTDVNAKALREGKRPATARQVLLGITKASLETDSFLSAASFQETTRVLTDAAIKGKRDELLGLKENVIIGKLVPAGTGMARYRKVKPAVKKETASDTVSSK</sequence>
<comment type="function">
    <text evidence="1">DNA-dependent RNA polymerase catalyzes the transcription of DNA into RNA using the four ribonucleoside triphosphates as substrates.</text>
</comment>
<comment type="catalytic activity">
    <reaction evidence="1">
        <text>RNA(n) + a ribonucleoside 5'-triphosphate = RNA(n+1) + diphosphate</text>
        <dbReference type="Rhea" id="RHEA:21248"/>
        <dbReference type="Rhea" id="RHEA-COMP:14527"/>
        <dbReference type="Rhea" id="RHEA-COMP:17342"/>
        <dbReference type="ChEBI" id="CHEBI:33019"/>
        <dbReference type="ChEBI" id="CHEBI:61557"/>
        <dbReference type="ChEBI" id="CHEBI:140395"/>
        <dbReference type="EC" id="2.7.7.6"/>
    </reaction>
</comment>
<comment type="cofactor">
    <cofactor evidence="1">
        <name>Mg(2+)</name>
        <dbReference type="ChEBI" id="CHEBI:18420"/>
    </cofactor>
    <text evidence="1">Binds 1 Mg(2+) ion per subunit.</text>
</comment>
<comment type="cofactor">
    <cofactor evidence="1">
        <name>Zn(2+)</name>
        <dbReference type="ChEBI" id="CHEBI:29105"/>
    </cofactor>
    <text evidence="1">Binds 2 Zn(2+) ions per subunit.</text>
</comment>
<comment type="subunit">
    <text evidence="1">The RNAP catalytic core consists of 2 alpha, 1 beta, 1 beta' and 1 omega subunit. When a sigma factor is associated with the core the holoenzyme is formed, which can initiate transcription.</text>
</comment>
<comment type="similarity">
    <text evidence="1">Belongs to the RNA polymerase beta' chain family.</text>
</comment>
<reference key="1">
    <citation type="journal article" date="2004" name="Nucleic Acids Res.">
        <title>Thermoadaptation trait revealed by the genome sequence of thermophilic Geobacillus kaustophilus.</title>
        <authorList>
            <person name="Takami H."/>
            <person name="Takaki Y."/>
            <person name="Chee G.-J."/>
            <person name="Nishi S."/>
            <person name="Shimamura S."/>
            <person name="Suzuki H."/>
            <person name="Matsui S."/>
            <person name="Uchiyama I."/>
        </authorList>
    </citation>
    <scope>NUCLEOTIDE SEQUENCE [LARGE SCALE GENOMIC DNA]</scope>
    <source>
        <strain>HTA426</strain>
    </source>
</reference>
<feature type="chain" id="PRO_0000225538" description="DNA-directed RNA polymerase subunit beta'">
    <location>
        <begin position="1"/>
        <end position="1199"/>
    </location>
</feature>
<feature type="binding site" evidence="1">
    <location>
        <position position="60"/>
    </location>
    <ligand>
        <name>Zn(2+)</name>
        <dbReference type="ChEBI" id="CHEBI:29105"/>
        <label>1</label>
    </ligand>
</feature>
<feature type="binding site" evidence="1">
    <location>
        <position position="62"/>
    </location>
    <ligand>
        <name>Zn(2+)</name>
        <dbReference type="ChEBI" id="CHEBI:29105"/>
        <label>1</label>
    </ligand>
</feature>
<feature type="binding site" evidence="1">
    <location>
        <position position="75"/>
    </location>
    <ligand>
        <name>Zn(2+)</name>
        <dbReference type="ChEBI" id="CHEBI:29105"/>
        <label>1</label>
    </ligand>
</feature>
<feature type="binding site" evidence="1">
    <location>
        <position position="78"/>
    </location>
    <ligand>
        <name>Zn(2+)</name>
        <dbReference type="ChEBI" id="CHEBI:29105"/>
        <label>1</label>
    </ligand>
</feature>
<feature type="binding site" evidence="1">
    <location>
        <position position="449"/>
    </location>
    <ligand>
        <name>Mg(2+)</name>
        <dbReference type="ChEBI" id="CHEBI:18420"/>
    </ligand>
</feature>
<feature type="binding site" evidence="1">
    <location>
        <position position="451"/>
    </location>
    <ligand>
        <name>Mg(2+)</name>
        <dbReference type="ChEBI" id="CHEBI:18420"/>
    </ligand>
</feature>
<feature type="binding site" evidence="1">
    <location>
        <position position="453"/>
    </location>
    <ligand>
        <name>Mg(2+)</name>
        <dbReference type="ChEBI" id="CHEBI:18420"/>
    </ligand>
</feature>
<feature type="binding site" evidence="1">
    <location>
        <position position="818"/>
    </location>
    <ligand>
        <name>Zn(2+)</name>
        <dbReference type="ChEBI" id="CHEBI:29105"/>
        <label>2</label>
    </ligand>
</feature>
<feature type="binding site" evidence="1">
    <location>
        <position position="892"/>
    </location>
    <ligand>
        <name>Zn(2+)</name>
        <dbReference type="ChEBI" id="CHEBI:29105"/>
        <label>2</label>
    </ligand>
</feature>
<feature type="binding site" evidence="1">
    <location>
        <position position="899"/>
    </location>
    <ligand>
        <name>Zn(2+)</name>
        <dbReference type="ChEBI" id="CHEBI:29105"/>
        <label>2</label>
    </ligand>
</feature>
<feature type="binding site" evidence="1">
    <location>
        <position position="902"/>
    </location>
    <ligand>
        <name>Zn(2+)</name>
        <dbReference type="ChEBI" id="CHEBI:29105"/>
        <label>2</label>
    </ligand>
</feature>
<protein>
    <recommendedName>
        <fullName evidence="1">DNA-directed RNA polymerase subunit beta'</fullName>
        <shortName evidence="1">RNAP subunit beta'</shortName>
        <ecNumber evidence="1">2.7.7.6</ecNumber>
    </recommendedName>
    <alternativeName>
        <fullName evidence="1">RNA polymerase subunit beta'</fullName>
    </alternativeName>
    <alternativeName>
        <fullName evidence="1">Transcriptase subunit beta'</fullName>
    </alternativeName>
</protein>
<organism>
    <name type="scientific">Geobacillus kaustophilus (strain HTA426)</name>
    <dbReference type="NCBI Taxonomy" id="235909"/>
    <lineage>
        <taxon>Bacteria</taxon>
        <taxon>Bacillati</taxon>
        <taxon>Bacillota</taxon>
        <taxon>Bacilli</taxon>
        <taxon>Bacillales</taxon>
        <taxon>Anoxybacillaceae</taxon>
        <taxon>Geobacillus</taxon>
        <taxon>Geobacillus thermoleovorans group</taxon>
    </lineage>
</organism>
<gene>
    <name evidence="1" type="primary">rpoC</name>
    <name type="ordered locus">GK0099</name>
</gene>
<dbReference type="EC" id="2.7.7.6" evidence="1"/>
<dbReference type="EMBL" id="BA000043">
    <property type="protein sequence ID" value="BAD74384.1"/>
    <property type="molecule type" value="Genomic_DNA"/>
</dbReference>
<dbReference type="RefSeq" id="WP_011229614.1">
    <property type="nucleotide sequence ID" value="NC_006510.1"/>
</dbReference>
<dbReference type="SMR" id="Q5L404"/>
<dbReference type="STRING" id="235909.GK0099"/>
<dbReference type="KEGG" id="gka:GK0099"/>
<dbReference type="eggNOG" id="COG0086">
    <property type="taxonomic scope" value="Bacteria"/>
</dbReference>
<dbReference type="HOGENOM" id="CLU_000524_3_1_9"/>
<dbReference type="Proteomes" id="UP000001172">
    <property type="component" value="Chromosome"/>
</dbReference>
<dbReference type="GO" id="GO:0000428">
    <property type="term" value="C:DNA-directed RNA polymerase complex"/>
    <property type="evidence" value="ECO:0007669"/>
    <property type="project" value="UniProtKB-KW"/>
</dbReference>
<dbReference type="GO" id="GO:0003677">
    <property type="term" value="F:DNA binding"/>
    <property type="evidence" value="ECO:0007669"/>
    <property type="project" value="UniProtKB-UniRule"/>
</dbReference>
<dbReference type="GO" id="GO:0003899">
    <property type="term" value="F:DNA-directed RNA polymerase activity"/>
    <property type="evidence" value="ECO:0007669"/>
    <property type="project" value="UniProtKB-UniRule"/>
</dbReference>
<dbReference type="GO" id="GO:0000287">
    <property type="term" value="F:magnesium ion binding"/>
    <property type="evidence" value="ECO:0007669"/>
    <property type="project" value="UniProtKB-UniRule"/>
</dbReference>
<dbReference type="GO" id="GO:0008270">
    <property type="term" value="F:zinc ion binding"/>
    <property type="evidence" value="ECO:0007669"/>
    <property type="project" value="UniProtKB-UniRule"/>
</dbReference>
<dbReference type="GO" id="GO:0006351">
    <property type="term" value="P:DNA-templated transcription"/>
    <property type="evidence" value="ECO:0007669"/>
    <property type="project" value="UniProtKB-UniRule"/>
</dbReference>
<dbReference type="CDD" id="cd02655">
    <property type="entry name" value="RNAP_beta'_C"/>
    <property type="match status" value="1"/>
</dbReference>
<dbReference type="CDD" id="cd01609">
    <property type="entry name" value="RNAP_beta'_N"/>
    <property type="match status" value="1"/>
</dbReference>
<dbReference type="FunFam" id="1.10.132.30:FF:000003">
    <property type="entry name" value="DNA-directed RNA polymerase subunit beta"/>
    <property type="match status" value="1"/>
</dbReference>
<dbReference type="FunFam" id="1.10.150.390:FF:000002">
    <property type="entry name" value="DNA-directed RNA polymerase subunit beta"/>
    <property type="match status" value="1"/>
</dbReference>
<dbReference type="FunFam" id="1.10.40.90:FF:000001">
    <property type="entry name" value="DNA-directed RNA polymerase subunit beta"/>
    <property type="match status" value="1"/>
</dbReference>
<dbReference type="FunFam" id="4.10.860.120:FF:000001">
    <property type="entry name" value="DNA-directed RNA polymerase subunit beta"/>
    <property type="match status" value="1"/>
</dbReference>
<dbReference type="Gene3D" id="1.10.132.30">
    <property type="match status" value="1"/>
</dbReference>
<dbReference type="Gene3D" id="1.10.150.390">
    <property type="match status" value="1"/>
</dbReference>
<dbReference type="Gene3D" id="1.10.1790.20">
    <property type="match status" value="1"/>
</dbReference>
<dbReference type="Gene3D" id="1.10.40.90">
    <property type="match status" value="1"/>
</dbReference>
<dbReference type="Gene3D" id="2.40.40.20">
    <property type="match status" value="1"/>
</dbReference>
<dbReference type="Gene3D" id="2.40.50.100">
    <property type="match status" value="1"/>
</dbReference>
<dbReference type="Gene3D" id="4.10.860.120">
    <property type="entry name" value="RNA polymerase II, clamp domain"/>
    <property type="match status" value="1"/>
</dbReference>
<dbReference type="Gene3D" id="1.10.274.100">
    <property type="entry name" value="RNA polymerase Rpb1, domain 3"/>
    <property type="match status" value="1"/>
</dbReference>
<dbReference type="HAMAP" id="MF_01322">
    <property type="entry name" value="RNApol_bact_RpoC"/>
    <property type="match status" value="1"/>
</dbReference>
<dbReference type="InterPro" id="IPR045867">
    <property type="entry name" value="DNA-dir_RpoC_beta_prime"/>
</dbReference>
<dbReference type="InterPro" id="IPR012754">
    <property type="entry name" value="DNA-dir_RpoC_beta_prime_bact"/>
</dbReference>
<dbReference type="InterPro" id="IPR000722">
    <property type="entry name" value="RNA_pol_asu"/>
</dbReference>
<dbReference type="InterPro" id="IPR006592">
    <property type="entry name" value="RNA_pol_N"/>
</dbReference>
<dbReference type="InterPro" id="IPR007080">
    <property type="entry name" value="RNA_pol_Rpb1_1"/>
</dbReference>
<dbReference type="InterPro" id="IPR007066">
    <property type="entry name" value="RNA_pol_Rpb1_3"/>
</dbReference>
<dbReference type="InterPro" id="IPR042102">
    <property type="entry name" value="RNA_pol_Rpb1_3_sf"/>
</dbReference>
<dbReference type="InterPro" id="IPR007083">
    <property type="entry name" value="RNA_pol_Rpb1_4"/>
</dbReference>
<dbReference type="InterPro" id="IPR007081">
    <property type="entry name" value="RNA_pol_Rpb1_5"/>
</dbReference>
<dbReference type="InterPro" id="IPR044893">
    <property type="entry name" value="RNA_pol_Rpb1_clamp_domain"/>
</dbReference>
<dbReference type="InterPro" id="IPR038120">
    <property type="entry name" value="Rpb1_funnel_sf"/>
</dbReference>
<dbReference type="NCBIfam" id="TIGR02386">
    <property type="entry name" value="rpoC_TIGR"/>
    <property type="match status" value="1"/>
</dbReference>
<dbReference type="PANTHER" id="PTHR19376">
    <property type="entry name" value="DNA-DIRECTED RNA POLYMERASE"/>
    <property type="match status" value="1"/>
</dbReference>
<dbReference type="PANTHER" id="PTHR19376:SF54">
    <property type="entry name" value="DNA-DIRECTED RNA POLYMERASE SUBUNIT BETA"/>
    <property type="match status" value="1"/>
</dbReference>
<dbReference type="Pfam" id="PF04997">
    <property type="entry name" value="RNA_pol_Rpb1_1"/>
    <property type="match status" value="1"/>
</dbReference>
<dbReference type="Pfam" id="PF00623">
    <property type="entry name" value="RNA_pol_Rpb1_2"/>
    <property type="match status" value="2"/>
</dbReference>
<dbReference type="Pfam" id="PF04983">
    <property type="entry name" value="RNA_pol_Rpb1_3"/>
    <property type="match status" value="1"/>
</dbReference>
<dbReference type="Pfam" id="PF05000">
    <property type="entry name" value="RNA_pol_Rpb1_4"/>
    <property type="match status" value="1"/>
</dbReference>
<dbReference type="Pfam" id="PF04998">
    <property type="entry name" value="RNA_pol_Rpb1_5"/>
    <property type="match status" value="2"/>
</dbReference>
<dbReference type="SMART" id="SM00663">
    <property type="entry name" value="RPOLA_N"/>
    <property type="match status" value="1"/>
</dbReference>
<dbReference type="SUPFAM" id="SSF64484">
    <property type="entry name" value="beta and beta-prime subunits of DNA dependent RNA-polymerase"/>
    <property type="match status" value="1"/>
</dbReference>